<sequence length="720" mass="79627">MLRVLHRAASALVMATVIGLAPAVAFALAEPTSTPQAPIAAYKPRSNEILWDGYGVPHIYGVDAPSAFYGYGWAQARSHGDNILRLYGEARGKGAEYWGPDYEQTTVWLLTNGVPERAQQWYAQQSPDFRANLDAFAAGINAYAQQNPDDISPEVRQVLPVSGADVVAHAHRLMNFLYVASPGRTLGEGDPPDLADQGSNSWAVAPGKTANGNALLLQNPHLSWTTDYFTYYEAHLVTPDFEIYGATQIGLPVIRFAFNQRMGITNTVNGMVGATNYRLTLQDGGYLYDGQVRPFERPQASYRLRQADGTTVDKPLEIRSSVHGPVFERADGTAVAVRVAGLDRPGMLEQYFDMITADSFDDYEAALARMQVPTFNIVYADREGTINYSFNGVAPKRAEGDIAFWQGLVPGDSSRYLWTETHPLDDLPRVTNPPGGFVQNSNDPPWTPTWPVTYTPKDFPSYLAPQTPHSLRAQQSVRLMSENDDLTLERFMALQLSHRAVMADRTLPDLIPAALIDPDPEVQAAARLLAAWDREFTSDSRAALLFEEWARLFAGQNFAGQAGFATPWSLDKPVSTPYGVRDPKAAVDQLRTAIANTKRKYGAIDRPFGDASRMILNDVNVPGAAGYGNLGSFRVFTWSDPDENGVRTPVHGETWVAMIEFSTPVRAYGLMSYGNSRQPGTTHYSDQIERVSRADFRELLLRREQVEAAVQERTPFNFKP</sequence>
<organism>
    <name type="scientific">Pseudomonas sp. (strain SY-77)</name>
    <dbReference type="NCBI Taxonomy" id="269086"/>
    <lineage>
        <taxon>Bacteria</taxon>
        <taxon>Pseudomonadati</taxon>
        <taxon>Pseudomonadota</taxon>
        <taxon>Gammaproteobacteria</taxon>
        <taxon>Pseudomonadales</taxon>
        <taxon>Pseudomonadaceae</taxon>
        <taxon>Pseudomonas</taxon>
    </lineage>
</organism>
<dbReference type="EC" id="3.5.1.93"/>
<dbReference type="EMBL" id="AF458663">
    <property type="protein sequence ID" value="AAN39264.1"/>
    <property type="molecule type" value="Genomic_DNA"/>
</dbReference>
<dbReference type="EMBL" id="M11436">
    <property type="protein sequence ID" value="AAA25826.1"/>
    <property type="molecule type" value="Genomic_DNA"/>
</dbReference>
<dbReference type="PIR" id="A24928">
    <property type="entry name" value="A24928"/>
</dbReference>
<dbReference type="PDB" id="1GK0">
    <property type="method" value="X-ray"/>
    <property type="resolution" value="2.50 A"/>
    <property type="chains" value="A/C=36-188, B/D=199-720"/>
</dbReference>
<dbReference type="PDB" id="1GK1">
    <property type="method" value="X-ray"/>
    <property type="resolution" value="2.40 A"/>
    <property type="chains" value="A/C=36-188, B/D=199-720"/>
</dbReference>
<dbReference type="PDB" id="1OR0">
    <property type="method" value="X-ray"/>
    <property type="resolution" value="2.00 A"/>
    <property type="chains" value="A/C=30-189, B/D=199-720"/>
</dbReference>
<dbReference type="PDB" id="2ADV">
    <property type="method" value="X-ray"/>
    <property type="resolution" value="2.24 A"/>
    <property type="chains" value="A=30-195, B=199-226, C=227-720"/>
</dbReference>
<dbReference type="PDB" id="2AE3">
    <property type="method" value="X-ray"/>
    <property type="resolution" value="2.40 A"/>
    <property type="chains" value="A=30-195, B=199-720"/>
</dbReference>
<dbReference type="PDB" id="2AE4">
    <property type="method" value="X-ray"/>
    <property type="resolution" value="2.30 A"/>
    <property type="chains" value="A=30-195, B=199-720"/>
</dbReference>
<dbReference type="PDB" id="2AE5">
    <property type="method" value="X-ray"/>
    <property type="resolution" value="2.24 A"/>
    <property type="chains" value="A=30-195, B=200-720"/>
</dbReference>
<dbReference type="PDB" id="3S8R">
    <property type="method" value="X-ray"/>
    <property type="resolution" value="2.50 A"/>
    <property type="chains" value="A/B=30-720"/>
</dbReference>
<dbReference type="PDBsum" id="1GK0"/>
<dbReference type="PDBsum" id="1GK1"/>
<dbReference type="PDBsum" id="1OR0"/>
<dbReference type="PDBsum" id="2ADV"/>
<dbReference type="PDBsum" id="2AE3"/>
<dbReference type="PDBsum" id="2AE4"/>
<dbReference type="PDBsum" id="2AE5"/>
<dbReference type="PDBsum" id="3S8R"/>
<dbReference type="SMR" id="P07662"/>
<dbReference type="MEROPS" id="S45.002"/>
<dbReference type="BRENDA" id="3.5.1.93">
    <property type="organism ID" value="5085"/>
</dbReference>
<dbReference type="EvolutionaryTrace" id="P07662"/>
<dbReference type="GO" id="GO:0042597">
    <property type="term" value="C:periplasmic space"/>
    <property type="evidence" value="ECO:0007669"/>
    <property type="project" value="UniProtKB-SubCell"/>
</dbReference>
<dbReference type="GO" id="GO:0033968">
    <property type="term" value="F:glutaryl-7-aminocephalosporanic-acid acylase activity"/>
    <property type="evidence" value="ECO:0007669"/>
    <property type="project" value="UniProtKB-EC"/>
</dbReference>
<dbReference type="GO" id="GO:0017000">
    <property type="term" value="P:antibiotic biosynthetic process"/>
    <property type="evidence" value="ECO:0007669"/>
    <property type="project" value="InterPro"/>
</dbReference>
<dbReference type="GO" id="GO:0046677">
    <property type="term" value="P:response to antibiotic"/>
    <property type="evidence" value="ECO:0007669"/>
    <property type="project" value="UniProtKB-KW"/>
</dbReference>
<dbReference type="CDD" id="cd01936">
    <property type="entry name" value="Ntn_CA"/>
    <property type="match status" value="1"/>
</dbReference>
<dbReference type="Gene3D" id="1.10.1400.10">
    <property type="match status" value="1"/>
</dbReference>
<dbReference type="Gene3D" id="2.30.120.10">
    <property type="match status" value="1"/>
</dbReference>
<dbReference type="Gene3D" id="3.60.20.10">
    <property type="entry name" value="Glutamine Phosphoribosylpyrophosphate, subunit 1, domain 1"/>
    <property type="match status" value="1"/>
</dbReference>
<dbReference type="Gene3D" id="1.10.439.10">
    <property type="entry name" value="Penicillin Amidohydrolase, domain 1"/>
    <property type="match status" value="1"/>
</dbReference>
<dbReference type="InterPro" id="IPR029055">
    <property type="entry name" value="Ntn_hydrolases_N"/>
</dbReference>
<dbReference type="InterPro" id="IPR014395">
    <property type="entry name" value="Pen/GL7ACA/AHL_acylase"/>
</dbReference>
<dbReference type="InterPro" id="IPR043147">
    <property type="entry name" value="Penicillin_amidase_A-knob"/>
</dbReference>
<dbReference type="InterPro" id="IPR023343">
    <property type="entry name" value="Penicillin_amidase_dom1"/>
</dbReference>
<dbReference type="InterPro" id="IPR043146">
    <property type="entry name" value="Penicillin_amidase_N_B-knob"/>
</dbReference>
<dbReference type="InterPro" id="IPR002692">
    <property type="entry name" value="S45"/>
</dbReference>
<dbReference type="PANTHER" id="PTHR34218:SF3">
    <property type="entry name" value="ACYL-HOMOSERINE LACTONE ACYLASE PVDQ"/>
    <property type="match status" value="1"/>
</dbReference>
<dbReference type="PANTHER" id="PTHR34218">
    <property type="entry name" value="PEPTIDASE S45 PENICILLIN AMIDASE"/>
    <property type="match status" value="1"/>
</dbReference>
<dbReference type="Pfam" id="PF01804">
    <property type="entry name" value="Penicil_amidase"/>
    <property type="match status" value="1"/>
</dbReference>
<dbReference type="PIRSF" id="PIRSF001227">
    <property type="entry name" value="Pen_acylase"/>
    <property type="match status" value="1"/>
</dbReference>
<dbReference type="SUPFAM" id="SSF56235">
    <property type="entry name" value="N-terminal nucleophile aminohydrolases (Ntn hydrolases)"/>
    <property type="match status" value="1"/>
</dbReference>
<reference key="1">
    <citation type="journal article" date="2002" name="Eur. J. Biochem.">
        <title>Directed evolution of a glutaryl acylase into an adipyl acylase.</title>
        <authorList>
            <person name="Sio C.F."/>
            <person name="Riemens A.M."/>
            <person name="Van Der Laan J.M."/>
            <person name="Verhaert R.M."/>
            <person name="Quax W.J."/>
        </authorList>
    </citation>
    <scope>NUCLEOTIDE SEQUENCE [GENOMIC DNA]</scope>
</reference>
<reference key="2">
    <citation type="journal article" date="1985" name="J. Bacteriol.">
        <title>Molecular cloning and structure of the gene for 7 beta-(4-carboxybutanamido)cephalosporanic acid acylase from a Pseudomonas strain.</title>
        <authorList>
            <person name="Matsuda A."/>
            <person name="Komatsu K."/>
        </authorList>
    </citation>
    <scope>NUCLEOTIDE SEQUENCE [GENOMIC DNA] OF 1-311</scope>
    <scope>PROTEIN SEQUENCE OF 30-46 AND 199-215</scope>
    <scope>FUNCTION</scope>
    <scope>SUBCELLULAR LOCATION</scope>
    <scope>INDUCTION</scope>
</reference>
<reference key="3">
    <citation type="journal article" date="2003" name="Biochemistry">
        <title>Crystal structures of glutaryl 7-aminocephalosporanic acid acylase: insight into autoproteolytic activation.</title>
        <authorList>
            <person name="Kim J.K."/>
            <person name="Yang I.S."/>
            <person name="Rhee S."/>
            <person name="Dauter Z."/>
            <person name="Lee Y.S."/>
            <person name="Park S.S."/>
            <person name="Kim K.H."/>
        </authorList>
    </citation>
    <scope>X-RAY CRYSTALLOGRAPHY (2.0 ANGSTROMS) OF 30-189 AND 199-720 OF WILD-TYPE AND 30-720 OF MUTANT ALA-199</scope>
    <scope>SUBUNIT</scope>
    <scope>MUTAGENESIS OF SER-199</scope>
    <scope>AUTOCATALYTIC PROCESSING MECHANISM</scope>
</reference>
<keyword id="KW-0002">3D-structure</keyword>
<keyword id="KW-0046">Antibiotic resistance</keyword>
<keyword id="KW-0903">Direct protein sequencing</keyword>
<keyword id="KW-0378">Hydrolase</keyword>
<keyword id="KW-0574">Periplasm</keyword>
<keyword id="KW-0732">Signal</keyword>
<keyword id="KW-0865">Zymogen</keyword>
<accession>P07662</accession>
<accession>Q84I62</accession>
<evidence type="ECO:0000255" key="1"/>
<evidence type="ECO:0000269" key="2">
    <source>
    </source>
</evidence>
<evidence type="ECO:0000269" key="3">
    <source>
    </source>
</evidence>
<evidence type="ECO:0000305" key="4"/>
<evidence type="ECO:0007829" key="5">
    <source>
        <dbReference type="PDB" id="1OR0"/>
    </source>
</evidence>
<evidence type="ECO:0007829" key="6">
    <source>
        <dbReference type="PDB" id="2ADV"/>
    </source>
</evidence>
<evidence type="ECO:0007829" key="7">
    <source>
        <dbReference type="PDB" id="2AE5"/>
    </source>
</evidence>
<evidence type="ECO:0007829" key="8">
    <source>
        <dbReference type="PDB" id="3S8R"/>
    </source>
</evidence>
<feature type="signal peptide" evidence="3">
    <location>
        <begin position="1"/>
        <end position="29"/>
    </location>
</feature>
<feature type="chain" id="PRO_0000027353" description="Glutaryl-7-aminocephalosporanic-acid acylase">
    <location>
        <begin position="30"/>
        <end position="720"/>
    </location>
</feature>
<feature type="chain" id="PRO_0000027354" description="Glutaryl-7-aminocephalosporanic-acid acylase subunit alpha">
    <location>
        <begin position="30"/>
        <end position="189"/>
    </location>
</feature>
<feature type="propeptide" id="PRO_0000253351" description="Spacer peptide" evidence="3">
    <location>
        <begin position="190"/>
        <end position="198"/>
    </location>
</feature>
<feature type="chain" id="PRO_0000027355" description="Glutaryl-7-aminocephalosporanic-acid acylase subunit beta">
    <location>
        <begin position="199"/>
        <end position="720"/>
    </location>
</feature>
<feature type="active site" description="Nucleophile">
    <location>
        <position position="199"/>
    </location>
</feature>
<feature type="active site" evidence="1">
    <location>
        <position position="221"/>
    </location>
</feature>
<feature type="active site" evidence="1">
    <location>
        <position position="653"/>
    </location>
</feature>
<feature type="mutagenesis site" description="Loss of activity. Lack of autoprocessing." evidence="2">
    <original>S</original>
    <variation>A</variation>
    <location>
        <position position="199"/>
    </location>
</feature>
<feature type="sequence conflict" description="In Ref. 2; AAA25826." evidence="4" ref="2">
    <original>H</original>
    <variation>Q</variation>
    <location>
        <position position="79"/>
    </location>
</feature>
<feature type="sequence conflict" description="In Ref. 2; AAA25826." evidence="4" ref="2">
    <original>E</original>
    <variation>D</variation>
    <location>
        <position position="154"/>
    </location>
</feature>
<feature type="strand" evidence="5">
    <location>
        <begin position="48"/>
        <end position="52"/>
    </location>
</feature>
<feature type="strand" evidence="5">
    <location>
        <begin position="57"/>
        <end position="60"/>
    </location>
</feature>
<feature type="helix" evidence="5">
    <location>
        <begin position="64"/>
        <end position="90"/>
    </location>
</feature>
<feature type="helix" evidence="5">
    <location>
        <begin position="94"/>
        <end position="98"/>
    </location>
</feature>
<feature type="helix" evidence="5">
    <location>
        <begin position="100"/>
        <end position="102"/>
    </location>
</feature>
<feature type="helix" evidence="5">
    <location>
        <begin position="103"/>
        <end position="111"/>
    </location>
</feature>
<feature type="helix" evidence="5">
    <location>
        <begin position="114"/>
        <end position="123"/>
    </location>
</feature>
<feature type="helix" evidence="5">
    <location>
        <begin position="127"/>
        <end position="146"/>
    </location>
</feature>
<feature type="helix" evidence="5">
    <location>
        <begin position="148"/>
        <end position="150"/>
    </location>
</feature>
<feature type="helix" evidence="5">
    <location>
        <begin position="153"/>
        <end position="158"/>
    </location>
</feature>
<feature type="helix" evidence="5">
    <location>
        <begin position="163"/>
        <end position="176"/>
    </location>
</feature>
<feature type="turn" evidence="5">
    <location>
        <begin position="177"/>
        <end position="179"/>
    </location>
</feature>
<feature type="helix" evidence="5">
    <location>
        <begin position="182"/>
        <end position="186"/>
    </location>
</feature>
<feature type="helix" evidence="8">
    <location>
        <begin position="192"/>
        <end position="195"/>
    </location>
</feature>
<feature type="strand" evidence="5">
    <location>
        <begin position="200"/>
        <end position="204"/>
    </location>
</feature>
<feature type="helix" evidence="5">
    <location>
        <begin position="206"/>
        <end position="208"/>
    </location>
</feature>
<feature type="strand" evidence="5">
    <location>
        <begin position="209"/>
        <end position="212"/>
    </location>
</feature>
<feature type="strand" evidence="5">
    <location>
        <begin position="215"/>
        <end position="219"/>
    </location>
</feature>
<feature type="strand" evidence="5">
    <location>
        <begin position="221"/>
        <end position="225"/>
    </location>
</feature>
<feature type="helix" evidence="5">
    <location>
        <begin position="227"/>
        <end position="229"/>
    </location>
</feature>
<feature type="strand" evidence="5">
    <location>
        <begin position="231"/>
        <end position="237"/>
    </location>
</feature>
<feature type="strand" evidence="5">
    <location>
        <begin position="242"/>
        <end position="248"/>
    </location>
</feature>
<feature type="strand" evidence="5">
    <location>
        <begin position="255"/>
        <end position="258"/>
    </location>
</feature>
<feature type="strand" evidence="5">
    <location>
        <begin position="260"/>
        <end position="267"/>
    </location>
</feature>
<feature type="strand" evidence="5">
    <location>
        <begin position="274"/>
        <end position="278"/>
    </location>
</feature>
<feature type="strand" evidence="5">
    <location>
        <begin position="285"/>
        <end position="288"/>
    </location>
</feature>
<feature type="strand" evidence="5">
    <location>
        <begin position="291"/>
        <end position="293"/>
    </location>
</feature>
<feature type="strand" evidence="5">
    <location>
        <begin position="299"/>
        <end position="305"/>
    </location>
</feature>
<feature type="strand" evidence="5">
    <location>
        <begin position="311"/>
        <end position="317"/>
    </location>
</feature>
<feature type="strand" evidence="5">
    <location>
        <begin position="322"/>
        <end position="328"/>
    </location>
</feature>
<feature type="strand" evidence="5">
    <location>
        <begin position="334"/>
        <end position="340"/>
    </location>
</feature>
<feature type="helix" evidence="5">
    <location>
        <begin position="347"/>
        <end position="355"/>
    </location>
</feature>
<feature type="helix" evidence="5">
    <location>
        <begin position="360"/>
        <end position="367"/>
    </location>
</feature>
<feature type="strand" evidence="5">
    <location>
        <begin position="376"/>
        <end position="381"/>
    </location>
</feature>
<feature type="strand" evidence="5">
    <location>
        <begin position="386"/>
        <end position="390"/>
    </location>
</feature>
<feature type="helix" evidence="5">
    <location>
        <begin position="402"/>
        <end position="406"/>
    </location>
</feature>
<feature type="strand" evidence="7">
    <location>
        <begin position="407"/>
        <end position="412"/>
    </location>
</feature>
<feature type="helix" evidence="5">
    <location>
        <begin position="414"/>
        <end position="416"/>
    </location>
</feature>
<feature type="helix" evidence="5">
    <location>
        <begin position="424"/>
        <end position="426"/>
    </location>
</feature>
<feature type="strand" evidence="5">
    <location>
        <begin position="429"/>
        <end position="432"/>
    </location>
</feature>
<feature type="strand" evidence="5">
    <location>
        <begin position="436"/>
        <end position="439"/>
    </location>
</feature>
<feature type="strand" evidence="5">
    <location>
        <begin position="441"/>
        <end position="443"/>
    </location>
</feature>
<feature type="strand" evidence="5">
    <location>
        <begin position="448"/>
        <end position="451"/>
    </location>
</feature>
<feature type="helix" evidence="5">
    <location>
        <begin position="456"/>
        <end position="458"/>
    </location>
</feature>
<feature type="helix" evidence="5">
    <location>
        <begin position="471"/>
        <end position="481"/>
    </location>
</feature>
<feature type="helix" evidence="5">
    <location>
        <begin position="488"/>
        <end position="495"/>
    </location>
</feature>
<feature type="helix" evidence="5">
    <location>
        <begin position="501"/>
        <end position="514"/>
    </location>
</feature>
<feature type="helix" evidence="5">
    <location>
        <begin position="520"/>
        <end position="531"/>
    </location>
</feature>
<feature type="helix" evidence="5">
    <location>
        <begin position="543"/>
        <end position="553"/>
    </location>
</feature>
<feature type="turn" evidence="6">
    <location>
        <begin position="555"/>
        <end position="558"/>
    </location>
</feature>
<feature type="strand" evidence="5">
    <location>
        <begin position="564"/>
        <end position="566"/>
    </location>
</feature>
<feature type="turn" evidence="5">
    <location>
        <begin position="573"/>
        <end position="575"/>
    </location>
</feature>
<feature type="strand" evidence="5">
    <location>
        <begin position="577"/>
        <end position="581"/>
    </location>
</feature>
<feature type="helix" evidence="5">
    <location>
        <begin position="583"/>
        <end position="601"/>
    </location>
</feature>
<feature type="strand" evidence="5">
    <location>
        <begin position="602"/>
        <end position="605"/>
    </location>
</feature>
<feature type="helix" evidence="5">
    <location>
        <begin position="608"/>
        <end position="611"/>
    </location>
</feature>
<feature type="strand" evidence="5">
    <location>
        <begin position="612"/>
        <end position="616"/>
    </location>
</feature>
<feature type="strand" evidence="5">
    <location>
        <begin position="619"/>
        <end position="622"/>
    </location>
</feature>
<feature type="helix" evidence="5">
    <location>
        <begin position="628"/>
        <end position="630"/>
    </location>
</feature>
<feature type="strand" evidence="5">
    <location>
        <begin position="633"/>
        <end position="638"/>
    </location>
</feature>
<feature type="strand" evidence="5">
    <location>
        <begin position="649"/>
        <end position="653"/>
    </location>
</feature>
<feature type="strand" evidence="5">
    <location>
        <begin position="655"/>
        <end position="660"/>
    </location>
</feature>
<feature type="strand" evidence="5">
    <location>
        <begin position="666"/>
        <end position="671"/>
    </location>
</feature>
<feature type="strand" evidence="5">
    <location>
        <begin position="682"/>
        <end position="687"/>
    </location>
</feature>
<feature type="helix" evidence="5">
    <location>
        <begin position="688"/>
        <end position="691"/>
    </location>
</feature>
<feature type="turn" evidence="5">
    <location>
        <begin position="692"/>
        <end position="694"/>
    </location>
</feature>
<feature type="helix" evidence="5">
    <location>
        <begin position="703"/>
        <end position="709"/>
    </location>
</feature>
<feature type="strand" evidence="5">
    <location>
        <begin position="710"/>
        <end position="715"/>
    </location>
</feature>
<comment type="function">
    <text evidence="3">Catalyzes the deacylation of 7 beta-(4-carboxybutanamido)cephalosporanic acid (glutaryl-7-aminocephalosporanic acid or GL-7-ACA) to 7-aminocephalosporanic acid (7-ACA).</text>
</comment>
<comment type="catalytic activity">
    <reaction>
        <text>(7R)-7-(4-carboxybutanamido)cephalosporanate + H2O = (7R)-7-aminocephalosporanate + glutarate</text>
        <dbReference type="Rhea" id="RHEA:23508"/>
        <dbReference type="ChEBI" id="CHEBI:15377"/>
        <dbReference type="ChEBI" id="CHEBI:30921"/>
        <dbReference type="ChEBI" id="CHEBI:58501"/>
        <dbReference type="ChEBI" id="CHEBI:58693"/>
        <dbReference type="EC" id="3.5.1.93"/>
    </reaction>
</comment>
<comment type="subunit">
    <text evidence="2">Heterotetramer of two alpha and two beta subunits processed from the same precursor.</text>
</comment>
<comment type="subcellular location">
    <subcellularLocation>
        <location evidence="3">Periplasm</location>
    </subcellularLocation>
</comment>
<comment type="induction">
    <text evidence="3">By glutaric acid.</text>
</comment>
<comment type="similarity">
    <text evidence="4">Belongs to the peptidase S45 family.</text>
</comment>
<protein>
    <recommendedName>
        <fullName>Glutaryl-7-aminocephalosporanic-acid acylase</fullName>
        <shortName>Glutaryl-7-ACA acylase</shortName>
        <ecNumber>3.5.1.93</ecNumber>
    </recommendedName>
    <alternativeName>
        <fullName>7-beta-(4-carboxybutanamido)cephalosporanic acid acylase</fullName>
    </alternativeName>
    <alternativeName>
        <fullName>GL-7-ACA acylase</fullName>
        <shortName>GCA</shortName>
    </alternativeName>
    <component>
        <recommendedName>
            <fullName>Glutaryl-7-aminocephalosporanic-acid acylase subunit alpha</fullName>
            <shortName>Glutaryl-7-ACA acylase subunit alpha</shortName>
        </recommendedName>
    </component>
    <component>
        <recommendedName>
            <fullName>Glutaryl-7-aminocephalosporanic-acid acylase subunit beta</fullName>
            <shortName>Glutaryl-7-ACA acylase subunit beta</shortName>
        </recommendedName>
    </component>
</protein>
<proteinExistence type="evidence at protein level"/>
<name>G7AC_PSEU7</name>